<dbReference type="EC" id="4.1.1.48" evidence="1"/>
<dbReference type="EMBL" id="AJ248284">
    <property type="protein sequence ID" value="CAB49386.1"/>
    <property type="molecule type" value="Genomic_DNA"/>
</dbReference>
<dbReference type="EMBL" id="HE613800">
    <property type="protein sequence ID" value="CCE69847.1"/>
    <property type="molecule type" value="Genomic_DNA"/>
</dbReference>
<dbReference type="PIR" id="C75163">
    <property type="entry name" value="C75163"/>
</dbReference>
<dbReference type="RefSeq" id="WP_010867588.1">
    <property type="nucleotide sequence ID" value="NC_000868.1"/>
</dbReference>
<dbReference type="SMR" id="Q9V1G3"/>
<dbReference type="STRING" id="272844.PAB2043"/>
<dbReference type="KEGG" id="pab:PAB2043"/>
<dbReference type="PATRIC" id="fig|272844.11.peg.491"/>
<dbReference type="eggNOG" id="arCOG01088">
    <property type="taxonomic scope" value="Archaea"/>
</dbReference>
<dbReference type="HOGENOM" id="CLU_034247_0_1_2"/>
<dbReference type="OrthoDB" id="15223at2157"/>
<dbReference type="PhylomeDB" id="Q9V1G3"/>
<dbReference type="UniPathway" id="UPA00035">
    <property type="reaction ID" value="UER00043"/>
</dbReference>
<dbReference type="Proteomes" id="UP000000810">
    <property type="component" value="Chromosome"/>
</dbReference>
<dbReference type="Proteomes" id="UP000009139">
    <property type="component" value="Chromosome"/>
</dbReference>
<dbReference type="GO" id="GO:0004425">
    <property type="term" value="F:indole-3-glycerol-phosphate synthase activity"/>
    <property type="evidence" value="ECO:0007669"/>
    <property type="project" value="UniProtKB-UniRule"/>
</dbReference>
<dbReference type="GO" id="GO:0004640">
    <property type="term" value="F:phosphoribosylanthranilate isomerase activity"/>
    <property type="evidence" value="ECO:0007669"/>
    <property type="project" value="TreeGrafter"/>
</dbReference>
<dbReference type="GO" id="GO:0000162">
    <property type="term" value="P:L-tryptophan biosynthetic process"/>
    <property type="evidence" value="ECO:0007669"/>
    <property type="project" value="UniProtKB-UniRule"/>
</dbReference>
<dbReference type="CDD" id="cd00331">
    <property type="entry name" value="IGPS"/>
    <property type="match status" value="1"/>
</dbReference>
<dbReference type="Gene3D" id="3.20.20.70">
    <property type="entry name" value="Aldolase class I"/>
    <property type="match status" value="1"/>
</dbReference>
<dbReference type="HAMAP" id="MF_00134_A">
    <property type="entry name" value="IGPS_A"/>
    <property type="match status" value="1"/>
</dbReference>
<dbReference type="InterPro" id="IPR013785">
    <property type="entry name" value="Aldolase_TIM"/>
</dbReference>
<dbReference type="InterPro" id="IPR045186">
    <property type="entry name" value="Indole-3-glycerol_P_synth"/>
</dbReference>
<dbReference type="InterPro" id="IPR013798">
    <property type="entry name" value="Indole-3-glycerol_P_synth_dom"/>
</dbReference>
<dbReference type="InterPro" id="IPR001468">
    <property type="entry name" value="Indole-3-GlycerolPSynthase_CS"/>
</dbReference>
<dbReference type="InterPro" id="IPR011060">
    <property type="entry name" value="RibuloseP-bd_barrel"/>
</dbReference>
<dbReference type="NCBIfam" id="NF001376">
    <property type="entry name" value="PRK00278.2-3"/>
    <property type="match status" value="1"/>
</dbReference>
<dbReference type="PANTHER" id="PTHR22854:SF2">
    <property type="entry name" value="INDOLE-3-GLYCEROL-PHOSPHATE SYNTHASE"/>
    <property type="match status" value="1"/>
</dbReference>
<dbReference type="PANTHER" id="PTHR22854">
    <property type="entry name" value="TRYPTOPHAN BIOSYNTHESIS PROTEIN"/>
    <property type="match status" value="1"/>
</dbReference>
<dbReference type="Pfam" id="PF00218">
    <property type="entry name" value="IGPS"/>
    <property type="match status" value="1"/>
</dbReference>
<dbReference type="SUPFAM" id="SSF51366">
    <property type="entry name" value="Ribulose-phoshate binding barrel"/>
    <property type="match status" value="1"/>
</dbReference>
<dbReference type="PROSITE" id="PS00614">
    <property type="entry name" value="IGPS"/>
    <property type="match status" value="1"/>
</dbReference>
<comment type="catalytic activity">
    <reaction evidence="1">
        <text>1-(2-carboxyphenylamino)-1-deoxy-D-ribulose 5-phosphate + H(+) = (1S,2R)-1-C-(indol-3-yl)glycerol 3-phosphate + CO2 + H2O</text>
        <dbReference type="Rhea" id="RHEA:23476"/>
        <dbReference type="ChEBI" id="CHEBI:15377"/>
        <dbReference type="ChEBI" id="CHEBI:15378"/>
        <dbReference type="ChEBI" id="CHEBI:16526"/>
        <dbReference type="ChEBI" id="CHEBI:58613"/>
        <dbReference type="ChEBI" id="CHEBI:58866"/>
        <dbReference type="EC" id="4.1.1.48"/>
    </reaction>
</comment>
<comment type="pathway">
    <text evidence="1">Amino-acid biosynthesis; L-tryptophan biosynthesis; L-tryptophan from chorismate: step 4/5.</text>
</comment>
<comment type="similarity">
    <text evidence="1">Belongs to the TrpC family.</text>
</comment>
<proteinExistence type="inferred from homology"/>
<accession>Q9V1G3</accession>
<accession>G8ZGG8</accession>
<reference key="1">
    <citation type="journal article" date="2003" name="Mol. Microbiol.">
        <title>An integrated analysis of the genome of the hyperthermophilic archaeon Pyrococcus abyssi.</title>
        <authorList>
            <person name="Cohen G.N."/>
            <person name="Barbe V."/>
            <person name="Flament D."/>
            <person name="Galperin M."/>
            <person name="Heilig R."/>
            <person name="Lecompte O."/>
            <person name="Poch O."/>
            <person name="Prieur D."/>
            <person name="Querellou J."/>
            <person name="Ripp R."/>
            <person name="Thierry J.-C."/>
            <person name="Van der Oost J."/>
            <person name="Weissenbach J."/>
            <person name="Zivanovic Y."/>
            <person name="Forterre P."/>
        </authorList>
    </citation>
    <scope>NUCLEOTIDE SEQUENCE [LARGE SCALE GENOMIC DNA]</scope>
    <source>
        <strain>GE5 / Orsay</strain>
    </source>
</reference>
<reference key="2">
    <citation type="journal article" date="2012" name="Curr. Microbiol.">
        <title>Re-annotation of two hyperthermophilic archaea Pyrococcus abyssi GE5 and Pyrococcus furiosus DSM 3638.</title>
        <authorList>
            <person name="Gao J."/>
            <person name="Wang J."/>
        </authorList>
    </citation>
    <scope>GENOME REANNOTATION</scope>
    <source>
        <strain>GE5 / Orsay</strain>
    </source>
</reference>
<feature type="chain" id="PRO_0000154297" description="Indole-3-glycerol phosphate synthase">
    <location>
        <begin position="1"/>
        <end position="229"/>
    </location>
</feature>
<protein>
    <recommendedName>
        <fullName evidence="1">Indole-3-glycerol phosphate synthase</fullName>
        <shortName evidence="1">IGPS</shortName>
        <ecNumber evidence="1">4.1.1.48</ecNumber>
    </recommendedName>
</protein>
<name>TRPC_PYRAB</name>
<keyword id="KW-0028">Amino-acid biosynthesis</keyword>
<keyword id="KW-0057">Aromatic amino acid biosynthesis</keyword>
<keyword id="KW-0210">Decarboxylase</keyword>
<keyword id="KW-0456">Lyase</keyword>
<keyword id="KW-0822">Tryptophan biosynthesis</keyword>
<sequence length="229" mass="25737">MVIFGLSRRIKRCTKNPIIAELKVYSPKYGDLLRGRDPLEILRRYERAGAVGISYITDPKYFRGNFDFFKRLCKETELPVLRKDFITTKEEIEKTAEAGGSAVLLITRLLKDKLPEFVDHAREHGLDTLVEVHTLEELKIAIQTNSTMIGINNRDIGKLELDDGNVSLTAKLAPLIPDKFVKVSESGITTLEDLKVALKYADAALIGTALMKTEDPEKLLKSFVEAKIC</sequence>
<gene>
    <name evidence="1" type="primary">trpC</name>
    <name type="ordered locus">PYRAB04640</name>
    <name type="ORF">PAB2043</name>
</gene>
<evidence type="ECO:0000255" key="1">
    <source>
        <dbReference type="HAMAP-Rule" id="MF_00134"/>
    </source>
</evidence>
<organism>
    <name type="scientific">Pyrococcus abyssi (strain GE5 / Orsay)</name>
    <dbReference type="NCBI Taxonomy" id="272844"/>
    <lineage>
        <taxon>Archaea</taxon>
        <taxon>Methanobacteriati</taxon>
        <taxon>Methanobacteriota</taxon>
        <taxon>Thermococci</taxon>
        <taxon>Thermococcales</taxon>
        <taxon>Thermococcaceae</taxon>
        <taxon>Pyrococcus</taxon>
    </lineage>
</organism>